<organism>
    <name type="scientific">Pyrococcus horikoshii (strain ATCC 700860 / DSM 12428 / JCM 9974 / NBRC 100139 / OT-3)</name>
    <dbReference type="NCBI Taxonomy" id="70601"/>
    <lineage>
        <taxon>Archaea</taxon>
        <taxon>Methanobacteriati</taxon>
        <taxon>Methanobacteriota</taxon>
        <taxon>Thermococci</taxon>
        <taxon>Thermococcales</taxon>
        <taxon>Thermococcaceae</taxon>
        <taxon>Pyrococcus</taxon>
    </lineage>
</organism>
<name>RPO12_PYRHO</name>
<sequence>MPEAVYRCAKCGREVKLDLSTTRDLRCPYCGSKILYKPRPKIPRRVKAI</sequence>
<gene>
    <name evidence="1" type="primary">rpo12</name>
    <name evidence="1" type="synonym">rpoP</name>
    <name type="ordered locus">PH1900.1</name>
    <name type="ORF">PHS056</name>
</gene>
<evidence type="ECO:0000255" key="1">
    <source>
        <dbReference type="HAMAP-Rule" id="MF_00615"/>
    </source>
</evidence>
<evidence type="ECO:0000305" key="2"/>
<proteinExistence type="inferred from homology"/>
<keyword id="KW-0963">Cytoplasm</keyword>
<keyword id="KW-0240">DNA-directed RNA polymerase</keyword>
<keyword id="KW-0479">Metal-binding</keyword>
<keyword id="KW-0548">Nucleotidyltransferase</keyword>
<keyword id="KW-0804">Transcription</keyword>
<keyword id="KW-0808">Transferase</keyword>
<keyword id="KW-0862">Zinc</keyword>
<dbReference type="EC" id="2.7.7.6" evidence="1"/>
<dbReference type="EMBL" id="BA000001">
    <property type="protein sequence ID" value="BAA31024.1"/>
    <property type="status" value="ALT_INIT"/>
    <property type="molecule type" value="Genomic_DNA"/>
</dbReference>
<dbReference type="PIR" id="A71204">
    <property type="entry name" value="A71204"/>
</dbReference>
<dbReference type="RefSeq" id="WP_010885964.1">
    <property type="nucleotide sequence ID" value="NC_000961.1"/>
</dbReference>
<dbReference type="SMR" id="O74105"/>
<dbReference type="STRING" id="70601.gene:9378909"/>
<dbReference type="EnsemblBacteria" id="BAA31024">
    <property type="protein sequence ID" value="BAA31024"/>
    <property type="gene ID" value="BAA31024"/>
</dbReference>
<dbReference type="GeneID" id="1442746"/>
<dbReference type="KEGG" id="pho:PHS056"/>
<dbReference type="eggNOG" id="arCOG04341">
    <property type="taxonomic scope" value="Archaea"/>
</dbReference>
<dbReference type="OrthoDB" id="129238at2157"/>
<dbReference type="Proteomes" id="UP000000752">
    <property type="component" value="Chromosome"/>
</dbReference>
<dbReference type="GO" id="GO:0005737">
    <property type="term" value="C:cytoplasm"/>
    <property type="evidence" value="ECO:0007669"/>
    <property type="project" value="UniProtKB-SubCell"/>
</dbReference>
<dbReference type="GO" id="GO:0000428">
    <property type="term" value="C:DNA-directed RNA polymerase complex"/>
    <property type="evidence" value="ECO:0007669"/>
    <property type="project" value="UniProtKB-KW"/>
</dbReference>
<dbReference type="GO" id="GO:0003677">
    <property type="term" value="F:DNA binding"/>
    <property type="evidence" value="ECO:0007669"/>
    <property type="project" value="InterPro"/>
</dbReference>
<dbReference type="GO" id="GO:0003899">
    <property type="term" value="F:DNA-directed RNA polymerase activity"/>
    <property type="evidence" value="ECO:0007669"/>
    <property type="project" value="UniProtKB-UniRule"/>
</dbReference>
<dbReference type="GO" id="GO:0008270">
    <property type="term" value="F:zinc ion binding"/>
    <property type="evidence" value="ECO:0007669"/>
    <property type="project" value="UniProtKB-UniRule"/>
</dbReference>
<dbReference type="GO" id="GO:0006351">
    <property type="term" value="P:DNA-templated transcription"/>
    <property type="evidence" value="ECO:0007669"/>
    <property type="project" value="UniProtKB-UniRule"/>
</dbReference>
<dbReference type="Gene3D" id="2.20.28.30">
    <property type="entry name" value="RNA polymerase ii, chain L"/>
    <property type="match status" value="1"/>
</dbReference>
<dbReference type="HAMAP" id="MF_00615">
    <property type="entry name" value="RNApol_arch_Rpo12"/>
    <property type="match status" value="1"/>
</dbReference>
<dbReference type="InterPro" id="IPR006591">
    <property type="entry name" value="RNAP_P/RPABC4"/>
</dbReference>
<dbReference type="InterPro" id="IPR029040">
    <property type="entry name" value="RPABC4/Spt4"/>
</dbReference>
<dbReference type="InterPro" id="IPR023464">
    <property type="entry name" value="Rpo12"/>
</dbReference>
<dbReference type="NCBIfam" id="NF001607">
    <property type="entry name" value="PRK00398.1-4"/>
    <property type="match status" value="1"/>
</dbReference>
<dbReference type="Pfam" id="PF03604">
    <property type="entry name" value="Zn_ribbon_RPAB4"/>
    <property type="match status" value="1"/>
</dbReference>
<dbReference type="SMART" id="SM00659">
    <property type="entry name" value="RPOLCX"/>
    <property type="match status" value="1"/>
</dbReference>
<dbReference type="SUPFAM" id="SSF63393">
    <property type="entry name" value="RNA polymerase subunits"/>
    <property type="match status" value="1"/>
</dbReference>
<accession>O74105</accession>
<protein>
    <recommendedName>
        <fullName evidence="1">DNA-directed RNA polymerase subunit Rpo12</fullName>
        <ecNumber evidence="1">2.7.7.6</ecNumber>
    </recommendedName>
    <alternativeName>
        <fullName evidence="1">DNA-directed RNA polymerase subunit P</fullName>
    </alternativeName>
</protein>
<comment type="function">
    <text evidence="1">DNA-dependent RNA polymerase (RNAP) catalyzes the transcription of DNA into RNA using the four ribonucleoside triphosphates as substrates.</text>
</comment>
<comment type="catalytic activity">
    <reaction evidence="1">
        <text>RNA(n) + a ribonucleoside 5'-triphosphate = RNA(n+1) + diphosphate</text>
        <dbReference type="Rhea" id="RHEA:21248"/>
        <dbReference type="Rhea" id="RHEA-COMP:14527"/>
        <dbReference type="Rhea" id="RHEA-COMP:17342"/>
        <dbReference type="ChEBI" id="CHEBI:33019"/>
        <dbReference type="ChEBI" id="CHEBI:61557"/>
        <dbReference type="ChEBI" id="CHEBI:140395"/>
        <dbReference type="EC" id="2.7.7.6"/>
    </reaction>
</comment>
<comment type="cofactor">
    <cofactor evidence="1">
        <name>Zn(2+)</name>
        <dbReference type="ChEBI" id="CHEBI:29105"/>
    </cofactor>
    <text evidence="1">Binds 1 zinc ion.</text>
</comment>
<comment type="subunit">
    <text evidence="1">Part of the RNA polymerase complex.</text>
</comment>
<comment type="subcellular location">
    <subcellularLocation>
        <location evidence="1">Cytoplasm</location>
    </subcellularLocation>
</comment>
<comment type="similarity">
    <text evidence="1">Belongs to the archaeal Rpo12/eukaryotic RPC10 RNA polymerase subunit family.</text>
</comment>
<comment type="sequence caution" evidence="2">
    <conflict type="erroneous initiation">
        <sequence resource="EMBL-CDS" id="BAA31024"/>
    </conflict>
    <text>Extended N-terminus.</text>
</comment>
<reference key="1">
    <citation type="journal article" date="1998" name="DNA Res.">
        <title>Complete sequence and gene organization of the genome of a hyper-thermophilic archaebacterium, Pyrococcus horikoshii OT3.</title>
        <authorList>
            <person name="Kawarabayasi Y."/>
            <person name="Sawada M."/>
            <person name="Horikawa H."/>
            <person name="Haikawa Y."/>
            <person name="Hino Y."/>
            <person name="Yamamoto S."/>
            <person name="Sekine M."/>
            <person name="Baba S."/>
            <person name="Kosugi H."/>
            <person name="Hosoyama A."/>
            <person name="Nagai Y."/>
            <person name="Sakai M."/>
            <person name="Ogura K."/>
            <person name="Otsuka R."/>
            <person name="Nakazawa H."/>
            <person name="Takamiya M."/>
            <person name="Ohfuku Y."/>
            <person name="Funahashi T."/>
            <person name="Tanaka T."/>
            <person name="Kudoh Y."/>
            <person name="Yamazaki J."/>
            <person name="Kushida N."/>
            <person name="Oguchi A."/>
            <person name="Aoki K."/>
            <person name="Yoshizawa T."/>
            <person name="Nakamura Y."/>
            <person name="Robb F.T."/>
            <person name="Horikoshi K."/>
            <person name="Masuchi Y."/>
            <person name="Shizuya H."/>
            <person name="Kikuchi H."/>
        </authorList>
    </citation>
    <scope>NUCLEOTIDE SEQUENCE [LARGE SCALE GENOMIC DNA]</scope>
    <source>
        <strain>ATCC 700860 / DSM 12428 / JCM 9974 / NBRC 100139 / OT-3</strain>
    </source>
</reference>
<feature type="chain" id="PRO_0000159764" description="DNA-directed RNA polymerase subunit Rpo12">
    <location>
        <begin position="1"/>
        <end position="49"/>
    </location>
</feature>
<feature type="binding site" evidence="1">
    <location>
        <position position="11"/>
    </location>
    <ligand>
        <name>Zn(2+)</name>
        <dbReference type="ChEBI" id="CHEBI:29105"/>
    </ligand>
</feature>
<feature type="binding site" evidence="1">
    <location>
        <position position="27"/>
    </location>
    <ligand>
        <name>Zn(2+)</name>
        <dbReference type="ChEBI" id="CHEBI:29105"/>
    </ligand>
</feature>
<feature type="binding site" evidence="1">
    <location>
        <position position="30"/>
    </location>
    <ligand>
        <name>Zn(2+)</name>
        <dbReference type="ChEBI" id="CHEBI:29105"/>
    </ligand>
</feature>